<sequence length="153" mass="17039">MKVRVVAVGRDRSGLYAPAVEEYAKRLGRYLRFELVEVPEARKLAGTAGAKGEEGATLLAKIGPRERVVVLDERGDELTSVAFAERVRRWMERGQDVALLIGGSDGLAPEVLARADERLAVSRFTLAHRLARLVLVEQLYRAMTILRGEPYHK</sequence>
<dbReference type="EC" id="2.1.1.177" evidence="1"/>
<dbReference type="EMBL" id="CP001131">
    <property type="protein sequence ID" value="ACG71486.1"/>
    <property type="molecule type" value="Genomic_DNA"/>
</dbReference>
<dbReference type="RefSeq" id="WP_012524322.1">
    <property type="nucleotide sequence ID" value="NC_011145.1"/>
</dbReference>
<dbReference type="SMR" id="B4UM78"/>
<dbReference type="KEGG" id="ank:AnaeK_0244"/>
<dbReference type="HOGENOM" id="CLU_100552_1_0_7"/>
<dbReference type="OrthoDB" id="9806643at2"/>
<dbReference type="Proteomes" id="UP000001871">
    <property type="component" value="Chromosome"/>
</dbReference>
<dbReference type="GO" id="GO:0005737">
    <property type="term" value="C:cytoplasm"/>
    <property type="evidence" value="ECO:0007669"/>
    <property type="project" value="UniProtKB-SubCell"/>
</dbReference>
<dbReference type="GO" id="GO:0070038">
    <property type="term" value="F:rRNA (pseudouridine-N3-)-methyltransferase activity"/>
    <property type="evidence" value="ECO:0007669"/>
    <property type="project" value="UniProtKB-UniRule"/>
</dbReference>
<dbReference type="CDD" id="cd18081">
    <property type="entry name" value="RlmH-like"/>
    <property type="match status" value="1"/>
</dbReference>
<dbReference type="Gene3D" id="3.40.1280.10">
    <property type="match status" value="1"/>
</dbReference>
<dbReference type="HAMAP" id="MF_00658">
    <property type="entry name" value="23SrRNA_methyltr_H"/>
    <property type="match status" value="1"/>
</dbReference>
<dbReference type="InterPro" id="IPR029028">
    <property type="entry name" value="Alpha/beta_knot_MTases"/>
</dbReference>
<dbReference type="InterPro" id="IPR003742">
    <property type="entry name" value="RlmH-like"/>
</dbReference>
<dbReference type="InterPro" id="IPR029026">
    <property type="entry name" value="tRNA_m1G_MTases_N"/>
</dbReference>
<dbReference type="NCBIfam" id="NF000986">
    <property type="entry name" value="PRK00103.1-4"/>
    <property type="match status" value="1"/>
</dbReference>
<dbReference type="PANTHER" id="PTHR33603">
    <property type="entry name" value="METHYLTRANSFERASE"/>
    <property type="match status" value="1"/>
</dbReference>
<dbReference type="PANTHER" id="PTHR33603:SF1">
    <property type="entry name" value="RIBOSOMAL RNA LARGE SUBUNIT METHYLTRANSFERASE H"/>
    <property type="match status" value="1"/>
</dbReference>
<dbReference type="Pfam" id="PF02590">
    <property type="entry name" value="SPOUT_MTase"/>
    <property type="match status" value="1"/>
</dbReference>
<dbReference type="PIRSF" id="PIRSF004505">
    <property type="entry name" value="MT_bac"/>
    <property type="match status" value="1"/>
</dbReference>
<dbReference type="SUPFAM" id="SSF75217">
    <property type="entry name" value="alpha/beta knot"/>
    <property type="match status" value="1"/>
</dbReference>
<organism>
    <name type="scientific">Anaeromyxobacter sp. (strain K)</name>
    <dbReference type="NCBI Taxonomy" id="447217"/>
    <lineage>
        <taxon>Bacteria</taxon>
        <taxon>Pseudomonadati</taxon>
        <taxon>Myxococcota</taxon>
        <taxon>Myxococcia</taxon>
        <taxon>Myxococcales</taxon>
        <taxon>Cystobacterineae</taxon>
        <taxon>Anaeromyxobacteraceae</taxon>
        <taxon>Anaeromyxobacter</taxon>
    </lineage>
</organism>
<comment type="function">
    <text evidence="1">Specifically methylates the pseudouridine at position 1915 (m3Psi1915) in 23S rRNA.</text>
</comment>
<comment type="catalytic activity">
    <reaction evidence="1">
        <text>pseudouridine(1915) in 23S rRNA + S-adenosyl-L-methionine = N(3)-methylpseudouridine(1915) in 23S rRNA + S-adenosyl-L-homocysteine + H(+)</text>
        <dbReference type="Rhea" id="RHEA:42752"/>
        <dbReference type="Rhea" id="RHEA-COMP:10221"/>
        <dbReference type="Rhea" id="RHEA-COMP:10222"/>
        <dbReference type="ChEBI" id="CHEBI:15378"/>
        <dbReference type="ChEBI" id="CHEBI:57856"/>
        <dbReference type="ChEBI" id="CHEBI:59789"/>
        <dbReference type="ChEBI" id="CHEBI:65314"/>
        <dbReference type="ChEBI" id="CHEBI:74486"/>
        <dbReference type="EC" id="2.1.1.177"/>
    </reaction>
</comment>
<comment type="subunit">
    <text evidence="1">Homodimer.</text>
</comment>
<comment type="subcellular location">
    <subcellularLocation>
        <location evidence="1">Cytoplasm</location>
    </subcellularLocation>
</comment>
<comment type="similarity">
    <text evidence="1">Belongs to the RNA methyltransferase RlmH family.</text>
</comment>
<keyword id="KW-0963">Cytoplasm</keyword>
<keyword id="KW-0489">Methyltransferase</keyword>
<keyword id="KW-0698">rRNA processing</keyword>
<keyword id="KW-0949">S-adenosyl-L-methionine</keyword>
<keyword id="KW-0808">Transferase</keyword>
<protein>
    <recommendedName>
        <fullName evidence="1">Ribosomal RNA large subunit methyltransferase H</fullName>
        <ecNumber evidence="1">2.1.1.177</ecNumber>
    </recommendedName>
    <alternativeName>
        <fullName evidence="1">23S rRNA (pseudouridine1915-N3)-methyltransferase</fullName>
    </alternativeName>
    <alternativeName>
        <fullName evidence="1">23S rRNA m3Psi1915 methyltransferase</fullName>
    </alternativeName>
    <alternativeName>
        <fullName evidence="1">rRNA (pseudouridine-N3-)-methyltransferase RlmH</fullName>
    </alternativeName>
</protein>
<proteinExistence type="inferred from homology"/>
<name>RLMH_ANASK</name>
<reference key="1">
    <citation type="submission" date="2008-08" db="EMBL/GenBank/DDBJ databases">
        <title>Complete sequence of Anaeromyxobacter sp. K.</title>
        <authorList>
            <consortium name="US DOE Joint Genome Institute"/>
            <person name="Lucas S."/>
            <person name="Copeland A."/>
            <person name="Lapidus A."/>
            <person name="Glavina del Rio T."/>
            <person name="Dalin E."/>
            <person name="Tice H."/>
            <person name="Bruce D."/>
            <person name="Goodwin L."/>
            <person name="Pitluck S."/>
            <person name="Saunders E."/>
            <person name="Brettin T."/>
            <person name="Detter J.C."/>
            <person name="Han C."/>
            <person name="Larimer F."/>
            <person name="Land M."/>
            <person name="Hauser L."/>
            <person name="Kyrpides N."/>
            <person name="Ovchinnikiva G."/>
            <person name="Beliaev A."/>
        </authorList>
    </citation>
    <scope>NUCLEOTIDE SEQUENCE [LARGE SCALE GENOMIC DNA]</scope>
    <source>
        <strain>K</strain>
    </source>
</reference>
<evidence type="ECO:0000255" key="1">
    <source>
        <dbReference type="HAMAP-Rule" id="MF_00658"/>
    </source>
</evidence>
<feature type="chain" id="PRO_0000366559" description="Ribosomal RNA large subunit methyltransferase H">
    <location>
        <begin position="1"/>
        <end position="153"/>
    </location>
</feature>
<feature type="binding site" evidence="1">
    <location>
        <position position="71"/>
    </location>
    <ligand>
        <name>S-adenosyl-L-methionine</name>
        <dbReference type="ChEBI" id="CHEBI:59789"/>
    </ligand>
</feature>
<feature type="binding site" evidence="1">
    <location>
        <position position="102"/>
    </location>
    <ligand>
        <name>S-adenosyl-L-methionine</name>
        <dbReference type="ChEBI" id="CHEBI:59789"/>
    </ligand>
</feature>
<accession>B4UM78</accession>
<gene>
    <name evidence="1" type="primary">rlmH</name>
    <name type="ordered locus">AnaeK_0244</name>
</gene>